<sequence>MYSIKCDDNKVMPRERLMRLGAESLSNQELLAILLRTGNKEKHVLELSSYLLSHLDSLADFKKMSLQELQHLAGIGKVKAIEIKAMIELVSRILATDKTLTDSVLTSVQVAEKIMAALGDKKQEHLVVLYLDNQNRIFEEKTIFIGTVRRSLAEPREILYYACKNMATSLIVIHNHPSGNIEPSSNDYCFTEKIKRSCEDLGIICLDHIIVSYKDYYSFREKSTLF</sequence>
<gene>
    <name type="ordered locus">SPs0978</name>
</gene>
<name>Y777_STRPQ</name>
<feature type="chain" id="PRO_0000411654" description="UPF0758 protein SPs0978">
    <location>
        <begin position="1"/>
        <end position="226"/>
    </location>
</feature>
<feature type="domain" description="MPN" evidence="1">
    <location>
        <begin position="103"/>
        <end position="225"/>
    </location>
</feature>
<feature type="short sequence motif" description="JAMM motif" evidence="1">
    <location>
        <begin position="174"/>
        <end position="187"/>
    </location>
</feature>
<feature type="binding site" evidence="1">
    <location>
        <position position="174"/>
    </location>
    <ligand>
        <name>Zn(2+)</name>
        <dbReference type="ChEBI" id="CHEBI:29105"/>
        <note>catalytic</note>
    </ligand>
</feature>
<feature type="binding site" evidence="1">
    <location>
        <position position="176"/>
    </location>
    <ligand>
        <name>Zn(2+)</name>
        <dbReference type="ChEBI" id="CHEBI:29105"/>
        <note>catalytic</note>
    </ligand>
</feature>
<feature type="binding site" evidence="1">
    <location>
        <position position="187"/>
    </location>
    <ligand>
        <name>Zn(2+)</name>
        <dbReference type="ChEBI" id="CHEBI:29105"/>
        <note>catalytic</note>
    </ligand>
</feature>
<reference key="1">
    <citation type="journal article" date="2003" name="Genome Res.">
        <title>Genome sequence of an M3 strain of Streptococcus pyogenes reveals a large-scale genomic rearrangement in invasive strains and new insights into phage evolution.</title>
        <authorList>
            <person name="Nakagawa I."/>
            <person name="Kurokawa K."/>
            <person name="Yamashita A."/>
            <person name="Nakata M."/>
            <person name="Tomiyasu Y."/>
            <person name="Okahashi N."/>
            <person name="Kawabata S."/>
            <person name="Yamazaki K."/>
            <person name="Shiba T."/>
            <person name="Yasunaga T."/>
            <person name="Hayashi H."/>
            <person name="Hattori M."/>
            <person name="Hamada S."/>
        </authorList>
    </citation>
    <scope>NUCLEOTIDE SEQUENCE [LARGE SCALE GENOMIC DNA]</scope>
    <source>
        <strain>SSI-1</strain>
    </source>
</reference>
<comment type="similarity">
    <text evidence="2">Belongs to the UPF0758 family.</text>
</comment>
<evidence type="ECO:0000255" key="1">
    <source>
        <dbReference type="PROSITE-ProRule" id="PRU01182"/>
    </source>
</evidence>
<evidence type="ECO:0000305" key="2"/>
<protein>
    <recommendedName>
        <fullName>UPF0758 protein SPs0978</fullName>
    </recommendedName>
</protein>
<keyword id="KW-0378">Hydrolase</keyword>
<keyword id="KW-0479">Metal-binding</keyword>
<keyword id="KW-0482">Metalloprotease</keyword>
<keyword id="KW-0645">Protease</keyword>
<keyword id="KW-0862">Zinc</keyword>
<organism>
    <name type="scientific">Streptococcus pyogenes serotype M3 (strain SSI-1)</name>
    <dbReference type="NCBI Taxonomy" id="193567"/>
    <lineage>
        <taxon>Bacteria</taxon>
        <taxon>Bacillati</taxon>
        <taxon>Bacillota</taxon>
        <taxon>Bacilli</taxon>
        <taxon>Lactobacillales</taxon>
        <taxon>Streptococcaceae</taxon>
        <taxon>Streptococcus</taxon>
    </lineage>
</organism>
<dbReference type="EMBL" id="BA000034">
    <property type="protein sequence ID" value="BAC64073.1"/>
    <property type="molecule type" value="Genomic_DNA"/>
</dbReference>
<dbReference type="SMR" id="P0DH29"/>
<dbReference type="KEGG" id="sps:SPs0978"/>
<dbReference type="HOGENOM" id="CLU_073529_0_2_9"/>
<dbReference type="GO" id="GO:0046872">
    <property type="term" value="F:metal ion binding"/>
    <property type="evidence" value="ECO:0007669"/>
    <property type="project" value="UniProtKB-KW"/>
</dbReference>
<dbReference type="GO" id="GO:0008237">
    <property type="term" value="F:metallopeptidase activity"/>
    <property type="evidence" value="ECO:0007669"/>
    <property type="project" value="UniProtKB-KW"/>
</dbReference>
<dbReference type="GO" id="GO:0006508">
    <property type="term" value="P:proteolysis"/>
    <property type="evidence" value="ECO:0007669"/>
    <property type="project" value="UniProtKB-KW"/>
</dbReference>
<dbReference type="CDD" id="cd08071">
    <property type="entry name" value="MPN_DUF2466"/>
    <property type="match status" value="1"/>
</dbReference>
<dbReference type="Gene3D" id="3.40.140.10">
    <property type="entry name" value="Cytidine Deaminase, domain 2"/>
    <property type="match status" value="1"/>
</dbReference>
<dbReference type="InterPro" id="IPR037518">
    <property type="entry name" value="MPN"/>
</dbReference>
<dbReference type="InterPro" id="IPR025657">
    <property type="entry name" value="RadC_JAB"/>
</dbReference>
<dbReference type="InterPro" id="IPR010994">
    <property type="entry name" value="RuvA_2-like"/>
</dbReference>
<dbReference type="InterPro" id="IPR001405">
    <property type="entry name" value="UPF0758"/>
</dbReference>
<dbReference type="InterPro" id="IPR020891">
    <property type="entry name" value="UPF0758_CS"/>
</dbReference>
<dbReference type="InterPro" id="IPR046778">
    <property type="entry name" value="UPF0758_N"/>
</dbReference>
<dbReference type="NCBIfam" id="NF000642">
    <property type="entry name" value="PRK00024.1"/>
    <property type="match status" value="1"/>
</dbReference>
<dbReference type="NCBIfam" id="TIGR00608">
    <property type="entry name" value="radc"/>
    <property type="match status" value="1"/>
</dbReference>
<dbReference type="PANTHER" id="PTHR30471">
    <property type="entry name" value="DNA REPAIR PROTEIN RADC"/>
    <property type="match status" value="1"/>
</dbReference>
<dbReference type="PANTHER" id="PTHR30471:SF3">
    <property type="entry name" value="UPF0758 PROTEIN YEES-RELATED"/>
    <property type="match status" value="1"/>
</dbReference>
<dbReference type="Pfam" id="PF04002">
    <property type="entry name" value="RadC"/>
    <property type="match status" value="1"/>
</dbReference>
<dbReference type="Pfam" id="PF20582">
    <property type="entry name" value="UPF0758_N"/>
    <property type="match status" value="1"/>
</dbReference>
<dbReference type="SUPFAM" id="SSF47781">
    <property type="entry name" value="RuvA domain 2-like"/>
    <property type="match status" value="1"/>
</dbReference>
<dbReference type="PROSITE" id="PS50249">
    <property type="entry name" value="MPN"/>
    <property type="match status" value="1"/>
</dbReference>
<dbReference type="PROSITE" id="PS01302">
    <property type="entry name" value="UPF0758"/>
    <property type="match status" value="1"/>
</dbReference>
<accession>P0DH29</accession>
<accession>Q878S2</accession>
<accession>Q8K7J5</accession>
<proteinExistence type="inferred from homology"/>